<protein>
    <recommendedName>
        <fullName evidence="1">Small ribosomal subunit protein bS16</fullName>
    </recommendedName>
    <alternativeName>
        <fullName evidence="3">30S ribosomal protein S16</fullName>
    </alternativeName>
</protein>
<dbReference type="EMBL" id="CP001389">
    <property type="protein sequence ID" value="ACP26956.1"/>
    <property type="molecule type" value="Genomic_DNA"/>
</dbReference>
<dbReference type="RefSeq" id="WP_012709704.1">
    <property type="nucleotide sequence ID" value="NC_012587.1"/>
</dbReference>
<dbReference type="RefSeq" id="YP_002827709.1">
    <property type="nucleotide sequence ID" value="NC_012587.1"/>
</dbReference>
<dbReference type="SMR" id="C3MAG3"/>
<dbReference type="STRING" id="394.NGR_c32230"/>
<dbReference type="KEGG" id="rhi:NGR_c32230"/>
<dbReference type="PATRIC" id="fig|394.7.peg.6061"/>
<dbReference type="eggNOG" id="COG0228">
    <property type="taxonomic scope" value="Bacteria"/>
</dbReference>
<dbReference type="HOGENOM" id="CLU_100590_3_1_5"/>
<dbReference type="OrthoDB" id="9807878at2"/>
<dbReference type="Proteomes" id="UP000001054">
    <property type="component" value="Chromosome"/>
</dbReference>
<dbReference type="GO" id="GO:0005737">
    <property type="term" value="C:cytoplasm"/>
    <property type="evidence" value="ECO:0007669"/>
    <property type="project" value="UniProtKB-ARBA"/>
</dbReference>
<dbReference type="GO" id="GO:0015935">
    <property type="term" value="C:small ribosomal subunit"/>
    <property type="evidence" value="ECO:0007669"/>
    <property type="project" value="TreeGrafter"/>
</dbReference>
<dbReference type="GO" id="GO:0003735">
    <property type="term" value="F:structural constituent of ribosome"/>
    <property type="evidence" value="ECO:0007669"/>
    <property type="project" value="InterPro"/>
</dbReference>
<dbReference type="GO" id="GO:0006412">
    <property type="term" value="P:translation"/>
    <property type="evidence" value="ECO:0007669"/>
    <property type="project" value="UniProtKB-UniRule"/>
</dbReference>
<dbReference type="Gene3D" id="3.30.1320.10">
    <property type="match status" value="1"/>
</dbReference>
<dbReference type="HAMAP" id="MF_00385">
    <property type="entry name" value="Ribosomal_bS16"/>
    <property type="match status" value="1"/>
</dbReference>
<dbReference type="InterPro" id="IPR000307">
    <property type="entry name" value="Ribosomal_bS16"/>
</dbReference>
<dbReference type="InterPro" id="IPR023803">
    <property type="entry name" value="Ribosomal_bS16_dom_sf"/>
</dbReference>
<dbReference type="NCBIfam" id="TIGR00002">
    <property type="entry name" value="S16"/>
    <property type="match status" value="1"/>
</dbReference>
<dbReference type="PANTHER" id="PTHR12919">
    <property type="entry name" value="30S RIBOSOMAL PROTEIN S16"/>
    <property type="match status" value="1"/>
</dbReference>
<dbReference type="PANTHER" id="PTHR12919:SF20">
    <property type="entry name" value="SMALL RIBOSOMAL SUBUNIT PROTEIN BS16M"/>
    <property type="match status" value="1"/>
</dbReference>
<dbReference type="Pfam" id="PF00886">
    <property type="entry name" value="Ribosomal_S16"/>
    <property type="match status" value="1"/>
</dbReference>
<dbReference type="SUPFAM" id="SSF54565">
    <property type="entry name" value="Ribosomal protein S16"/>
    <property type="match status" value="1"/>
</dbReference>
<organism>
    <name type="scientific">Sinorhizobium fredii (strain NBRC 101917 / NGR234)</name>
    <dbReference type="NCBI Taxonomy" id="394"/>
    <lineage>
        <taxon>Bacteria</taxon>
        <taxon>Pseudomonadati</taxon>
        <taxon>Pseudomonadota</taxon>
        <taxon>Alphaproteobacteria</taxon>
        <taxon>Hyphomicrobiales</taxon>
        <taxon>Rhizobiaceae</taxon>
        <taxon>Sinorhizobium/Ensifer group</taxon>
        <taxon>Sinorhizobium</taxon>
    </lineage>
</organism>
<feature type="chain" id="PRO_1000134319" description="Small ribosomal subunit protein bS16">
    <location>
        <begin position="1"/>
        <end position="124"/>
    </location>
</feature>
<feature type="region of interest" description="Disordered" evidence="2">
    <location>
        <begin position="82"/>
        <end position="124"/>
    </location>
</feature>
<feature type="compositionally biased region" description="Basic and acidic residues" evidence="2">
    <location>
        <begin position="99"/>
        <end position="113"/>
    </location>
</feature>
<feature type="compositionally biased region" description="Low complexity" evidence="2">
    <location>
        <begin position="114"/>
        <end position="124"/>
    </location>
</feature>
<proteinExistence type="inferred from homology"/>
<accession>C3MAG3</accession>
<sequence length="124" mass="13622">MALKIRLARGGSKKRPYYQIVVADARSPRDGRFLEKIGSWNPMLSKDDEKRIELNAERVSHWIAQGAQPTDRVLRFLDQAGLAKRPARSNPTKAVPGKKAQERAAEAKQKAEDAAAAAAESAAE</sequence>
<reference key="1">
    <citation type="journal article" date="2009" name="Appl. Environ. Microbiol.">
        <title>Rhizobium sp. strain NGR234 possesses a remarkable number of secretion systems.</title>
        <authorList>
            <person name="Schmeisser C."/>
            <person name="Liesegang H."/>
            <person name="Krysciak D."/>
            <person name="Bakkou N."/>
            <person name="Le Quere A."/>
            <person name="Wollherr A."/>
            <person name="Heinemeyer I."/>
            <person name="Morgenstern B."/>
            <person name="Pommerening-Roeser A."/>
            <person name="Flores M."/>
            <person name="Palacios R."/>
            <person name="Brenner S."/>
            <person name="Gottschalk G."/>
            <person name="Schmitz R.A."/>
            <person name="Broughton W.J."/>
            <person name="Perret X."/>
            <person name="Strittmatter A.W."/>
            <person name="Streit W.R."/>
        </authorList>
    </citation>
    <scope>NUCLEOTIDE SEQUENCE [LARGE SCALE GENOMIC DNA]</scope>
    <source>
        <strain>NBRC 101917 / NGR234</strain>
    </source>
</reference>
<evidence type="ECO:0000255" key="1">
    <source>
        <dbReference type="HAMAP-Rule" id="MF_00385"/>
    </source>
</evidence>
<evidence type="ECO:0000256" key="2">
    <source>
        <dbReference type="SAM" id="MobiDB-lite"/>
    </source>
</evidence>
<evidence type="ECO:0000305" key="3"/>
<keyword id="KW-1185">Reference proteome</keyword>
<keyword id="KW-0687">Ribonucleoprotein</keyword>
<keyword id="KW-0689">Ribosomal protein</keyword>
<comment type="similarity">
    <text evidence="1">Belongs to the bacterial ribosomal protein bS16 family.</text>
</comment>
<name>RS16_SINFN</name>
<gene>
    <name evidence="1" type="primary">rpsP</name>
    <name type="ordered locus">NGR_c32230</name>
</gene>